<sequence>MSNIDLIIKKEISLDELREKIIKGYDITKEEAMQLVEAPLEDLCSVANEIRKYFCSNTFDMCSIINAKSGKCSENCKFCAQSSHYDTKCDEYDILDKEKILEQGKSDFNKGVLRYSIVTSGRALYGKEIDEVYDAIETLNKETDGYICASLGLLDEEGFNKMKNAGLKRVHNNLEASRNFFSKVCTTHTYDDKINAIKAAQKAGMVVCSGGIMGMGETWEDRIDMAIELRELGIMSIPVNMLNPIASTPFENIEPLTEDDMRRIVAIYRFINPRAFIRLAGGRGLMKDKGKSCFLSGANAAITGDMLTTAGISIETDKKMVEELGYKIELKED</sequence>
<evidence type="ECO:0000255" key="1">
    <source>
        <dbReference type="HAMAP-Rule" id="MF_01694"/>
    </source>
</evidence>
<evidence type="ECO:0000255" key="2">
    <source>
        <dbReference type="PROSITE-ProRule" id="PRU01266"/>
    </source>
</evidence>
<proteinExistence type="inferred from homology"/>
<accession>C0QVM0</accession>
<keyword id="KW-0001">2Fe-2S</keyword>
<keyword id="KW-0004">4Fe-4S</keyword>
<keyword id="KW-0093">Biotin biosynthesis</keyword>
<keyword id="KW-0408">Iron</keyword>
<keyword id="KW-0411">Iron-sulfur</keyword>
<keyword id="KW-0479">Metal-binding</keyword>
<keyword id="KW-0949">S-adenosyl-L-methionine</keyword>
<keyword id="KW-0808">Transferase</keyword>
<gene>
    <name evidence="1" type="primary">bioB</name>
    <name type="ordered locus">BHWA1_02062</name>
</gene>
<protein>
    <recommendedName>
        <fullName evidence="1">Biotin synthase</fullName>
        <ecNumber evidence="1">2.8.1.6</ecNumber>
    </recommendedName>
</protein>
<reference key="1">
    <citation type="journal article" date="2009" name="PLoS ONE">
        <title>Genome sequence of the pathogenic intestinal spirochete Brachyspira hyodysenteriae reveals adaptations to its lifestyle in the porcine large intestine.</title>
        <authorList>
            <person name="Bellgard M.I."/>
            <person name="Wanchanthuek P."/>
            <person name="La T."/>
            <person name="Ryan K."/>
            <person name="Moolhuijzen P."/>
            <person name="Albertyn Z."/>
            <person name="Shaban B."/>
            <person name="Motro Y."/>
            <person name="Dunn D.S."/>
            <person name="Schibeci D."/>
            <person name="Hunter A."/>
            <person name="Barrero R."/>
            <person name="Phillips N.D."/>
            <person name="Hampson D.J."/>
        </authorList>
    </citation>
    <scope>NUCLEOTIDE SEQUENCE [LARGE SCALE GENOMIC DNA]</scope>
    <source>
        <strain>ATCC 49526 / WA1</strain>
    </source>
</reference>
<comment type="function">
    <text evidence="1">Catalyzes the conversion of dethiobiotin (DTB) to biotin by the insertion of a sulfur atom into dethiobiotin via a radical-based mechanism.</text>
</comment>
<comment type="catalytic activity">
    <reaction evidence="1">
        <text>(4R,5S)-dethiobiotin + (sulfur carrier)-SH + 2 reduced [2Fe-2S]-[ferredoxin] + 2 S-adenosyl-L-methionine = (sulfur carrier)-H + biotin + 2 5'-deoxyadenosine + 2 L-methionine + 2 oxidized [2Fe-2S]-[ferredoxin]</text>
        <dbReference type="Rhea" id="RHEA:22060"/>
        <dbReference type="Rhea" id="RHEA-COMP:10000"/>
        <dbReference type="Rhea" id="RHEA-COMP:10001"/>
        <dbReference type="Rhea" id="RHEA-COMP:14737"/>
        <dbReference type="Rhea" id="RHEA-COMP:14739"/>
        <dbReference type="ChEBI" id="CHEBI:17319"/>
        <dbReference type="ChEBI" id="CHEBI:29917"/>
        <dbReference type="ChEBI" id="CHEBI:33737"/>
        <dbReference type="ChEBI" id="CHEBI:33738"/>
        <dbReference type="ChEBI" id="CHEBI:57586"/>
        <dbReference type="ChEBI" id="CHEBI:57844"/>
        <dbReference type="ChEBI" id="CHEBI:59789"/>
        <dbReference type="ChEBI" id="CHEBI:64428"/>
        <dbReference type="ChEBI" id="CHEBI:149473"/>
        <dbReference type="EC" id="2.8.1.6"/>
    </reaction>
</comment>
<comment type="cofactor">
    <cofactor evidence="1">
        <name>[4Fe-4S] cluster</name>
        <dbReference type="ChEBI" id="CHEBI:49883"/>
    </cofactor>
    <text evidence="1">Binds 1 [4Fe-4S] cluster. The cluster is coordinated with 3 cysteines and an exchangeable S-adenosyl-L-methionine.</text>
</comment>
<comment type="cofactor">
    <cofactor evidence="1">
        <name>[2Fe-2S] cluster</name>
        <dbReference type="ChEBI" id="CHEBI:190135"/>
    </cofactor>
    <text evidence="1">Binds 1 [2Fe-2S] cluster. The cluster is coordinated with 3 cysteines and 1 arginine.</text>
</comment>
<comment type="pathway">
    <text evidence="1">Cofactor biosynthesis; biotin biosynthesis; biotin from 7,8-diaminononanoate: step 2/2.</text>
</comment>
<comment type="subunit">
    <text evidence="1">Homodimer.</text>
</comment>
<comment type="similarity">
    <text evidence="1">Belongs to the radical SAM superfamily. Biotin synthase family.</text>
</comment>
<feature type="chain" id="PRO_0000381243" description="Biotin synthase">
    <location>
        <begin position="1"/>
        <end position="333"/>
    </location>
</feature>
<feature type="domain" description="Radical SAM core" evidence="2">
    <location>
        <begin position="54"/>
        <end position="283"/>
    </location>
</feature>
<feature type="binding site" evidence="1">
    <location>
        <position position="72"/>
    </location>
    <ligand>
        <name>[4Fe-4S] cluster</name>
        <dbReference type="ChEBI" id="CHEBI:49883"/>
        <note>4Fe-4S-S-AdoMet</note>
    </ligand>
</feature>
<feature type="binding site" evidence="1">
    <location>
        <position position="76"/>
    </location>
    <ligand>
        <name>[4Fe-4S] cluster</name>
        <dbReference type="ChEBI" id="CHEBI:49883"/>
        <note>4Fe-4S-S-AdoMet</note>
    </ligand>
</feature>
<feature type="binding site" evidence="1">
    <location>
        <position position="79"/>
    </location>
    <ligand>
        <name>[4Fe-4S] cluster</name>
        <dbReference type="ChEBI" id="CHEBI:49883"/>
        <note>4Fe-4S-S-AdoMet</note>
    </ligand>
</feature>
<feature type="binding site" evidence="1">
    <location>
        <position position="116"/>
    </location>
    <ligand>
        <name>[2Fe-2S] cluster</name>
        <dbReference type="ChEBI" id="CHEBI:190135"/>
    </ligand>
</feature>
<feature type="binding site" evidence="1">
    <location>
        <position position="148"/>
    </location>
    <ligand>
        <name>[2Fe-2S] cluster</name>
        <dbReference type="ChEBI" id="CHEBI:190135"/>
    </ligand>
</feature>
<feature type="binding site" evidence="1">
    <location>
        <position position="208"/>
    </location>
    <ligand>
        <name>[2Fe-2S] cluster</name>
        <dbReference type="ChEBI" id="CHEBI:190135"/>
    </ligand>
</feature>
<feature type="binding site" evidence="1">
    <location>
        <position position="278"/>
    </location>
    <ligand>
        <name>[2Fe-2S] cluster</name>
        <dbReference type="ChEBI" id="CHEBI:190135"/>
    </ligand>
</feature>
<dbReference type="EC" id="2.8.1.6" evidence="1"/>
<dbReference type="EMBL" id="CP001357">
    <property type="protein sequence ID" value="ACN84521.1"/>
    <property type="molecule type" value="Genomic_DNA"/>
</dbReference>
<dbReference type="RefSeq" id="WP_012671559.1">
    <property type="nucleotide sequence ID" value="NC_012225.1"/>
</dbReference>
<dbReference type="SMR" id="C0QVM0"/>
<dbReference type="STRING" id="565034.BHWA1_02062"/>
<dbReference type="KEGG" id="bhy:BHWA1_02062"/>
<dbReference type="eggNOG" id="COG0502">
    <property type="taxonomic scope" value="Bacteria"/>
</dbReference>
<dbReference type="HOGENOM" id="CLU_033172_2_1_12"/>
<dbReference type="UniPathway" id="UPA00078">
    <property type="reaction ID" value="UER00162"/>
</dbReference>
<dbReference type="Proteomes" id="UP000001803">
    <property type="component" value="Chromosome"/>
</dbReference>
<dbReference type="GO" id="GO:0051537">
    <property type="term" value="F:2 iron, 2 sulfur cluster binding"/>
    <property type="evidence" value="ECO:0007669"/>
    <property type="project" value="UniProtKB-KW"/>
</dbReference>
<dbReference type="GO" id="GO:0051539">
    <property type="term" value="F:4 iron, 4 sulfur cluster binding"/>
    <property type="evidence" value="ECO:0007669"/>
    <property type="project" value="UniProtKB-KW"/>
</dbReference>
<dbReference type="GO" id="GO:0004076">
    <property type="term" value="F:biotin synthase activity"/>
    <property type="evidence" value="ECO:0007669"/>
    <property type="project" value="UniProtKB-UniRule"/>
</dbReference>
<dbReference type="GO" id="GO:0005506">
    <property type="term" value="F:iron ion binding"/>
    <property type="evidence" value="ECO:0007669"/>
    <property type="project" value="UniProtKB-UniRule"/>
</dbReference>
<dbReference type="GO" id="GO:0009102">
    <property type="term" value="P:biotin biosynthetic process"/>
    <property type="evidence" value="ECO:0007669"/>
    <property type="project" value="UniProtKB-UniRule"/>
</dbReference>
<dbReference type="CDD" id="cd01335">
    <property type="entry name" value="Radical_SAM"/>
    <property type="match status" value="1"/>
</dbReference>
<dbReference type="FunFam" id="3.20.20.70:FF:000026">
    <property type="entry name" value="Biotin synthase"/>
    <property type="match status" value="1"/>
</dbReference>
<dbReference type="Gene3D" id="3.20.20.70">
    <property type="entry name" value="Aldolase class I"/>
    <property type="match status" value="1"/>
</dbReference>
<dbReference type="HAMAP" id="MF_01694">
    <property type="entry name" value="BioB"/>
    <property type="match status" value="1"/>
</dbReference>
<dbReference type="InterPro" id="IPR013785">
    <property type="entry name" value="Aldolase_TIM"/>
</dbReference>
<dbReference type="InterPro" id="IPR010722">
    <property type="entry name" value="BATS_dom"/>
</dbReference>
<dbReference type="InterPro" id="IPR002684">
    <property type="entry name" value="Biotin_synth/BioAB"/>
</dbReference>
<dbReference type="InterPro" id="IPR024177">
    <property type="entry name" value="Biotin_synthase"/>
</dbReference>
<dbReference type="InterPro" id="IPR006638">
    <property type="entry name" value="Elp3/MiaA/NifB-like_rSAM"/>
</dbReference>
<dbReference type="InterPro" id="IPR007197">
    <property type="entry name" value="rSAM"/>
</dbReference>
<dbReference type="NCBIfam" id="TIGR00433">
    <property type="entry name" value="bioB"/>
    <property type="match status" value="1"/>
</dbReference>
<dbReference type="PANTHER" id="PTHR22976">
    <property type="entry name" value="BIOTIN SYNTHASE"/>
    <property type="match status" value="1"/>
</dbReference>
<dbReference type="PANTHER" id="PTHR22976:SF2">
    <property type="entry name" value="BIOTIN SYNTHASE, MITOCHONDRIAL"/>
    <property type="match status" value="1"/>
</dbReference>
<dbReference type="Pfam" id="PF06968">
    <property type="entry name" value="BATS"/>
    <property type="match status" value="1"/>
</dbReference>
<dbReference type="Pfam" id="PF04055">
    <property type="entry name" value="Radical_SAM"/>
    <property type="match status" value="1"/>
</dbReference>
<dbReference type="PIRSF" id="PIRSF001619">
    <property type="entry name" value="Biotin_synth"/>
    <property type="match status" value="1"/>
</dbReference>
<dbReference type="SFLD" id="SFLDG01278">
    <property type="entry name" value="biotin_synthase_like"/>
    <property type="match status" value="1"/>
</dbReference>
<dbReference type="SFLD" id="SFLDS00029">
    <property type="entry name" value="Radical_SAM"/>
    <property type="match status" value="1"/>
</dbReference>
<dbReference type="SMART" id="SM00876">
    <property type="entry name" value="BATS"/>
    <property type="match status" value="1"/>
</dbReference>
<dbReference type="SMART" id="SM00729">
    <property type="entry name" value="Elp3"/>
    <property type="match status" value="1"/>
</dbReference>
<dbReference type="SUPFAM" id="SSF102114">
    <property type="entry name" value="Radical SAM enzymes"/>
    <property type="match status" value="1"/>
</dbReference>
<dbReference type="PROSITE" id="PS51918">
    <property type="entry name" value="RADICAL_SAM"/>
    <property type="match status" value="1"/>
</dbReference>
<name>BIOB_BRAHW</name>
<organism>
    <name type="scientific">Brachyspira hyodysenteriae (strain ATCC 49526 / WA1)</name>
    <dbReference type="NCBI Taxonomy" id="565034"/>
    <lineage>
        <taxon>Bacteria</taxon>
        <taxon>Pseudomonadati</taxon>
        <taxon>Spirochaetota</taxon>
        <taxon>Spirochaetia</taxon>
        <taxon>Brachyspirales</taxon>
        <taxon>Brachyspiraceae</taxon>
        <taxon>Brachyspira</taxon>
    </lineage>
</organism>